<gene>
    <name type="primary">moaE</name>
    <name type="ordered locus">all1638</name>
</gene>
<feature type="chain" id="PRO_0000163075" description="Molybdopterin synthase catalytic subunit">
    <location>
        <begin position="1"/>
        <end position="165"/>
    </location>
</feature>
<feature type="binding site" evidence="1">
    <location>
        <begin position="51"/>
        <end position="53"/>
    </location>
    <ligand>
        <name>substrate</name>
    </ligand>
</feature>
<feature type="binding site" evidence="1">
    <location>
        <begin position="118"/>
        <end position="119"/>
    </location>
    <ligand>
        <name>substrate</name>
    </ligand>
</feature>
<feature type="binding site" evidence="1">
    <location>
        <position position="134"/>
    </location>
    <ligand>
        <name>substrate</name>
    </ligand>
</feature>
<feature type="binding site" evidence="1">
    <location>
        <begin position="141"/>
        <end position="143"/>
    </location>
    <ligand>
        <name>substrate</name>
    </ligand>
</feature>
<protein>
    <recommendedName>
        <fullName>Molybdopterin synthase catalytic subunit</fullName>
        <ecNumber>2.8.1.12</ecNumber>
    </recommendedName>
    <alternativeName>
        <fullName>MPT synthase subunit 2</fullName>
    </alternativeName>
    <alternativeName>
        <fullName>Molybdenum cofactor biosynthesis protein E</fullName>
    </alternativeName>
    <alternativeName>
        <fullName>Molybdopterin-converting factor large subunit</fullName>
    </alternativeName>
    <alternativeName>
        <fullName>Molybdopterin-converting factor subunit 2</fullName>
    </alternativeName>
</protein>
<evidence type="ECO:0000250" key="1"/>
<evidence type="ECO:0000305" key="2"/>
<comment type="function">
    <text evidence="1">Converts molybdopterin precursor Z into molybdopterin. This requires the incorporation of two sulfur atoms into precursor Z to generate a dithiolene group. The sulfur is provided by MoaD (By similarity).</text>
</comment>
<comment type="catalytic activity">
    <reaction>
        <text>2 [molybdopterin-synthase sulfur-carrier protein]-C-terminal-Gly-aminoethanethioate + cyclic pyranopterin phosphate + H2O = molybdopterin + 2 [molybdopterin-synthase sulfur-carrier protein]-C-terminal Gly-Gly + 2 H(+)</text>
        <dbReference type="Rhea" id="RHEA:26333"/>
        <dbReference type="Rhea" id="RHEA-COMP:12202"/>
        <dbReference type="Rhea" id="RHEA-COMP:19907"/>
        <dbReference type="ChEBI" id="CHEBI:15377"/>
        <dbReference type="ChEBI" id="CHEBI:15378"/>
        <dbReference type="ChEBI" id="CHEBI:58698"/>
        <dbReference type="ChEBI" id="CHEBI:59648"/>
        <dbReference type="ChEBI" id="CHEBI:90778"/>
        <dbReference type="ChEBI" id="CHEBI:232372"/>
        <dbReference type="EC" id="2.8.1.12"/>
    </reaction>
</comment>
<comment type="pathway">
    <text>Cofactor biosynthesis; molybdopterin biosynthesis.</text>
</comment>
<comment type="subunit">
    <text evidence="1">Heterotetramer of 2 MoaD subunits and 2 MoaE subunits. Also stable as homodimer. The enzyme changes between these two forms during catalysis (By similarity).</text>
</comment>
<comment type="similarity">
    <text evidence="2">Belongs to the MoaE family.</text>
</comment>
<name>MOAE_NOSS1</name>
<accession>Q8YWH5</accession>
<dbReference type="EC" id="2.8.1.12"/>
<dbReference type="EMBL" id="BA000019">
    <property type="protein sequence ID" value="BAB78004.1"/>
    <property type="molecule type" value="Genomic_DNA"/>
</dbReference>
<dbReference type="PIR" id="AH2010">
    <property type="entry name" value="AH2010"/>
</dbReference>
<dbReference type="RefSeq" id="WP_010995807.1">
    <property type="nucleotide sequence ID" value="NZ_RSCN01000013.1"/>
</dbReference>
<dbReference type="SMR" id="Q8YWH5"/>
<dbReference type="STRING" id="103690.gene:10493655"/>
<dbReference type="KEGG" id="ana:all1638"/>
<dbReference type="eggNOG" id="COG0314">
    <property type="taxonomic scope" value="Bacteria"/>
</dbReference>
<dbReference type="OrthoDB" id="9803224at2"/>
<dbReference type="UniPathway" id="UPA00344"/>
<dbReference type="Proteomes" id="UP000002483">
    <property type="component" value="Chromosome"/>
</dbReference>
<dbReference type="GO" id="GO:0030366">
    <property type="term" value="F:molybdopterin synthase activity"/>
    <property type="evidence" value="ECO:0007669"/>
    <property type="project" value="UniProtKB-EC"/>
</dbReference>
<dbReference type="GO" id="GO:0006777">
    <property type="term" value="P:Mo-molybdopterin cofactor biosynthetic process"/>
    <property type="evidence" value="ECO:0007669"/>
    <property type="project" value="UniProtKB-KW"/>
</dbReference>
<dbReference type="CDD" id="cd00756">
    <property type="entry name" value="MoaE"/>
    <property type="match status" value="1"/>
</dbReference>
<dbReference type="Gene3D" id="3.90.1170.40">
    <property type="entry name" value="Molybdopterin biosynthesis MoaE subunit"/>
    <property type="match status" value="1"/>
</dbReference>
<dbReference type="InterPro" id="IPR036563">
    <property type="entry name" value="MoaE_sf"/>
</dbReference>
<dbReference type="InterPro" id="IPR003448">
    <property type="entry name" value="Mopterin_biosynth_MoaE"/>
</dbReference>
<dbReference type="PANTHER" id="PTHR23404">
    <property type="entry name" value="MOLYBDOPTERIN SYNTHASE RELATED"/>
    <property type="match status" value="1"/>
</dbReference>
<dbReference type="Pfam" id="PF02391">
    <property type="entry name" value="MoaE"/>
    <property type="match status" value="1"/>
</dbReference>
<dbReference type="SUPFAM" id="SSF54690">
    <property type="entry name" value="Molybdopterin synthase subunit MoaE"/>
    <property type="match status" value="1"/>
</dbReference>
<organism>
    <name type="scientific">Nostoc sp. (strain PCC 7120 / SAG 25.82 / UTEX 2576)</name>
    <dbReference type="NCBI Taxonomy" id="103690"/>
    <lineage>
        <taxon>Bacteria</taxon>
        <taxon>Bacillati</taxon>
        <taxon>Cyanobacteriota</taxon>
        <taxon>Cyanophyceae</taxon>
        <taxon>Nostocales</taxon>
        <taxon>Nostocaceae</taxon>
        <taxon>Nostoc</taxon>
    </lineage>
</organism>
<sequence>MKSVLPSTPIVTLKPKIEDSFAITFAPLSLEEIHALADDSANGAVVVMSGMVRNQTDGKPVVSLEYQAYEPMALRVFYQIAADIRSAWPAVNRVVIHHRIGRLQVGQISVLVAIGCPHRSEAFAACRYAIDTLKHNAPIWKKEHWQDGSSTWVSIGACEQSGQNC</sequence>
<proteinExistence type="inferred from homology"/>
<keyword id="KW-0501">Molybdenum cofactor biosynthesis</keyword>
<keyword id="KW-1185">Reference proteome</keyword>
<keyword id="KW-0808">Transferase</keyword>
<reference key="1">
    <citation type="journal article" date="2001" name="DNA Res.">
        <title>Complete genomic sequence of the filamentous nitrogen-fixing cyanobacterium Anabaena sp. strain PCC 7120.</title>
        <authorList>
            <person name="Kaneko T."/>
            <person name="Nakamura Y."/>
            <person name="Wolk C.P."/>
            <person name="Kuritz T."/>
            <person name="Sasamoto S."/>
            <person name="Watanabe A."/>
            <person name="Iriguchi M."/>
            <person name="Ishikawa A."/>
            <person name="Kawashima K."/>
            <person name="Kimura T."/>
            <person name="Kishida Y."/>
            <person name="Kohara M."/>
            <person name="Matsumoto M."/>
            <person name="Matsuno A."/>
            <person name="Muraki A."/>
            <person name="Nakazaki N."/>
            <person name="Shimpo S."/>
            <person name="Sugimoto M."/>
            <person name="Takazawa M."/>
            <person name="Yamada M."/>
            <person name="Yasuda M."/>
            <person name="Tabata S."/>
        </authorList>
    </citation>
    <scope>NUCLEOTIDE SEQUENCE [LARGE SCALE GENOMIC DNA]</scope>
    <source>
        <strain>PCC 7120 / SAG 25.82 / UTEX 2576</strain>
    </source>
</reference>